<accession>Q6L1E2</accession>
<keyword id="KW-0963">Cytoplasm</keyword>
<keyword id="KW-0489">Methyltransferase</keyword>
<keyword id="KW-0698">rRNA processing</keyword>
<keyword id="KW-0949">S-adenosyl-L-methionine</keyword>
<keyword id="KW-0808">Transferase</keyword>
<gene>
    <name evidence="1" type="primary">rlmE</name>
    <name evidence="1" type="synonym">rrmJ</name>
    <name type="ordered locus">PTO0625</name>
</gene>
<proteinExistence type="inferred from homology"/>
<dbReference type="EC" id="2.1.1.166" evidence="1"/>
<dbReference type="EMBL" id="AE017261">
    <property type="protein sequence ID" value="AAT43210.1"/>
    <property type="molecule type" value="Genomic_DNA"/>
</dbReference>
<dbReference type="RefSeq" id="WP_011177426.1">
    <property type="nucleotide sequence ID" value="NC_005877.1"/>
</dbReference>
<dbReference type="SMR" id="Q6L1E2"/>
<dbReference type="STRING" id="263820.PTO0625"/>
<dbReference type="PaxDb" id="263820-PTO0625"/>
<dbReference type="GeneID" id="2844739"/>
<dbReference type="KEGG" id="pto:PTO0625"/>
<dbReference type="PATRIC" id="fig|263820.9.peg.657"/>
<dbReference type="eggNOG" id="arCOG00079">
    <property type="taxonomic scope" value="Archaea"/>
</dbReference>
<dbReference type="HOGENOM" id="CLU_009422_4_4_2"/>
<dbReference type="InParanoid" id="Q6L1E2"/>
<dbReference type="OrthoDB" id="26307at2157"/>
<dbReference type="Proteomes" id="UP000000438">
    <property type="component" value="Chromosome"/>
</dbReference>
<dbReference type="GO" id="GO:0005737">
    <property type="term" value="C:cytoplasm"/>
    <property type="evidence" value="ECO:0007669"/>
    <property type="project" value="UniProtKB-SubCell"/>
</dbReference>
<dbReference type="GO" id="GO:0008650">
    <property type="term" value="F:rRNA (uridine-2'-O-)-methyltransferase activity"/>
    <property type="evidence" value="ECO:0007669"/>
    <property type="project" value="UniProtKB-UniRule"/>
</dbReference>
<dbReference type="Gene3D" id="3.40.50.150">
    <property type="entry name" value="Vaccinia Virus protein VP39"/>
    <property type="match status" value="1"/>
</dbReference>
<dbReference type="HAMAP" id="MF_01547">
    <property type="entry name" value="RNA_methyltr_E"/>
    <property type="match status" value="1"/>
</dbReference>
<dbReference type="InterPro" id="IPR050082">
    <property type="entry name" value="RNA_methyltr_RlmE"/>
</dbReference>
<dbReference type="InterPro" id="IPR002877">
    <property type="entry name" value="RNA_MeTrfase_FtsJ_dom"/>
</dbReference>
<dbReference type="InterPro" id="IPR015507">
    <property type="entry name" value="rRNA-MeTfrase_E"/>
</dbReference>
<dbReference type="InterPro" id="IPR029063">
    <property type="entry name" value="SAM-dependent_MTases_sf"/>
</dbReference>
<dbReference type="PANTHER" id="PTHR10920">
    <property type="entry name" value="RIBOSOMAL RNA METHYLTRANSFERASE"/>
    <property type="match status" value="1"/>
</dbReference>
<dbReference type="PANTHER" id="PTHR10920:SF18">
    <property type="entry name" value="RRNA METHYLTRANSFERASE 2, MITOCHONDRIAL"/>
    <property type="match status" value="1"/>
</dbReference>
<dbReference type="Pfam" id="PF01728">
    <property type="entry name" value="FtsJ"/>
    <property type="match status" value="1"/>
</dbReference>
<dbReference type="PIRSF" id="PIRSF005461">
    <property type="entry name" value="23S_rRNA_mtase"/>
    <property type="match status" value="1"/>
</dbReference>
<dbReference type="SUPFAM" id="SSF53335">
    <property type="entry name" value="S-adenosyl-L-methionine-dependent methyltransferases"/>
    <property type="match status" value="1"/>
</dbReference>
<name>RLME_PICTO</name>
<organism>
    <name type="scientific">Picrophilus torridus (strain ATCC 700027 / DSM 9790 / JCM 10055 / NBRC 100828 / KAW 2/3)</name>
    <dbReference type="NCBI Taxonomy" id="1122961"/>
    <lineage>
        <taxon>Archaea</taxon>
        <taxon>Methanobacteriati</taxon>
        <taxon>Thermoplasmatota</taxon>
        <taxon>Thermoplasmata</taxon>
        <taxon>Thermoplasmatales</taxon>
        <taxon>Picrophilaceae</taxon>
        <taxon>Picrophilus</taxon>
    </lineage>
</organism>
<comment type="function">
    <text evidence="1">Specifically methylates the uridine in position 2552 of 23S rRNA at the 2'-O position of the ribose in the fully assembled 50S ribosomal subunit.</text>
</comment>
<comment type="catalytic activity">
    <reaction evidence="1">
        <text>uridine(2552) in 23S rRNA + S-adenosyl-L-methionine = 2'-O-methyluridine(2552) in 23S rRNA + S-adenosyl-L-homocysteine + H(+)</text>
        <dbReference type="Rhea" id="RHEA:42720"/>
        <dbReference type="Rhea" id="RHEA-COMP:10202"/>
        <dbReference type="Rhea" id="RHEA-COMP:10203"/>
        <dbReference type="ChEBI" id="CHEBI:15378"/>
        <dbReference type="ChEBI" id="CHEBI:57856"/>
        <dbReference type="ChEBI" id="CHEBI:59789"/>
        <dbReference type="ChEBI" id="CHEBI:65315"/>
        <dbReference type="ChEBI" id="CHEBI:74478"/>
        <dbReference type="EC" id="2.1.1.166"/>
    </reaction>
</comment>
<comment type="subcellular location">
    <subcellularLocation>
        <location evidence="1">Cytoplasm</location>
    </subcellularLocation>
</comment>
<comment type="similarity">
    <text evidence="1">Belongs to the class I-like SAM-binding methyltransferase superfamily. RNA methyltransferase RlmE family.</text>
</comment>
<reference key="1">
    <citation type="journal article" date="2004" name="Proc. Natl. Acad. Sci. U.S.A.">
        <title>Genome sequence of Picrophilus torridus and its implications for life around pH 0.</title>
        <authorList>
            <person name="Fuetterer O."/>
            <person name="Angelov A."/>
            <person name="Liesegang H."/>
            <person name="Gottschalk G."/>
            <person name="Schleper C."/>
            <person name="Schepers B."/>
            <person name="Dock C."/>
            <person name="Antranikian G."/>
            <person name="Liebl W."/>
        </authorList>
    </citation>
    <scope>NUCLEOTIDE SEQUENCE [LARGE SCALE GENOMIC DNA]</scope>
    <source>
        <strain>ATCC 700027 / DSM 9790 / JCM 10055 / NBRC 100828 / KAW 2/3</strain>
    </source>
</reference>
<evidence type="ECO:0000255" key="1">
    <source>
        <dbReference type="HAMAP-Rule" id="MF_01547"/>
    </source>
</evidence>
<sequence>MNRKDKYYIRAKRENYRSRASYKIIEINNKYNIVSRGDNVLEFGSSPGGWTQVIENITQSVIIAVDINRMDPVKNTVFIKMNIFDDDIFKSIDHAMAENNIKNFDSILSDAMSRTSGIEDRDHYNSYKICERVMDISIPRLKNGGNIILKQFQGDMTNEFIKKWSGYFNYYKITKPKASRQHSREIYIIFLNRI</sequence>
<protein>
    <recommendedName>
        <fullName evidence="1">Ribosomal RNA large subunit methyltransferase E</fullName>
        <ecNumber evidence="1">2.1.1.166</ecNumber>
    </recommendedName>
    <alternativeName>
        <fullName evidence="1">23S rRNA Um2552 methyltransferase</fullName>
    </alternativeName>
    <alternativeName>
        <fullName evidence="1">rRNA (uridine-2'-O-)-methyltransferase</fullName>
    </alternativeName>
</protein>
<feature type="chain" id="PRO_0000155572" description="Ribosomal RNA large subunit methyltransferase E">
    <location>
        <begin position="1"/>
        <end position="194"/>
    </location>
</feature>
<feature type="active site" description="Proton acceptor" evidence="1">
    <location>
        <position position="150"/>
    </location>
</feature>
<feature type="binding site" evidence="1">
    <location>
        <position position="48"/>
    </location>
    <ligand>
        <name>S-adenosyl-L-methionine</name>
        <dbReference type="ChEBI" id="CHEBI:59789"/>
    </ligand>
</feature>
<feature type="binding site" evidence="1">
    <location>
        <position position="50"/>
    </location>
    <ligand>
        <name>S-adenosyl-L-methionine</name>
        <dbReference type="ChEBI" id="CHEBI:59789"/>
    </ligand>
</feature>
<feature type="binding site" evidence="1">
    <location>
        <position position="66"/>
    </location>
    <ligand>
        <name>S-adenosyl-L-methionine</name>
        <dbReference type="ChEBI" id="CHEBI:59789"/>
    </ligand>
</feature>
<feature type="binding site" evidence="1">
    <location>
        <position position="82"/>
    </location>
    <ligand>
        <name>S-adenosyl-L-methionine</name>
        <dbReference type="ChEBI" id="CHEBI:59789"/>
    </ligand>
</feature>
<feature type="binding site" evidence="1">
    <location>
        <position position="110"/>
    </location>
    <ligand>
        <name>S-adenosyl-L-methionine</name>
        <dbReference type="ChEBI" id="CHEBI:59789"/>
    </ligand>
</feature>